<keyword id="KW-0963">Cytoplasm</keyword>
<keyword id="KW-0539">Nucleus</keyword>
<keyword id="KW-0653">Protein transport</keyword>
<keyword id="KW-0813">Transport</keyword>
<accession>C5GE44</accession>
<dbReference type="EMBL" id="EQ999975">
    <property type="protein sequence ID" value="EEQ87789.1"/>
    <property type="molecule type" value="Genomic_DNA"/>
</dbReference>
<dbReference type="SMR" id="C5GE44"/>
<dbReference type="STRING" id="559297.C5GE44"/>
<dbReference type="VEuPathDB" id="FungiDB:BDCG_02909"/>
<dbReference type="eggNOG" id="ENOG502RNK4">
    <property type="taxonomic scope" value="Eukaryota"/>
</dbReference>
<dbReference type="HOGENOM" id="CLU_033658_0_0_1"/>
<dbReference type="OMA" id="DYTPHFL"/>
<dbReference type="GO" id="GO:0005737">
    <property type="term" value="C:cytoplasm"/>
    <property type="evidence" value="ECO:0007669"/>
    <property type="project" value="UniProtKB-SubCell"/>
</dbReference>
<dbReference type="GO" id="GO:0031965">
    <property type="term" value="C:nuclear membrane"/>
    <property type="evidence" value="ECO:0007669"/>
    <property type="project" value="TreeGrafter"/>
</dbReference>
<dbReference type="GO" id="GO:0070628">
    <property type="term" value="F:proteasome binding"/>
    <property type="evidence" value="ECO:0007669"/>
    <property type="project" value="TreeGrafter"/>
</dbReference>
<dbReference type="GO" id="GO:0071630">
    <property type="term" value="P:nuclear protein quality control by the ubiquitin-proteasome system"/>
    <property type="evidence" value="ECO:0007669"/>
    <property type="project" value="InterPro"/>
</dbReference>
<dbReference type="GO" id="GO:0031144">
    <property type="term" value="P:proteasome localization"/>
    <property type="evidence" value="ECO:0007669"/>
    <property type="project" value="InterPro"/>
</dbReference>
<dbReference type="GO" id="GO:0015031">
    <property type="term" value="P:protein transport"/>
    <property type="evidence" value="ECO:0007669"/>
    <property type="project" value="UniProtKB-KW"/>
</dbReference>
<dbReference type="FunFam" id="1.20.58.1590:FF:000001">
    <property type="entry name" value="Tethering factor for nuclear proteasome STS1"/>
    <property type="match status" value="1"/>
</dbReference>
<dbReference type="Gene3D" id="1.20.58.1590">
    <property type="entry name" value="Tethering factor for nuclear proteasome Cut8/Sts1"/>
    <property type="match status" value="1"/>
</dbReference>
<dbReference type="InterPro" id="IPR013868">
    <property type="entry name" value="Cut8/Sts1_fam"/>
</dbReference>
<dbReference type="InterPro" id="IPR038422">
    <property type="entry name" value="Cut8/Sts1_sf"/>
</dbReference>
<dbReference type="PANTHER" id="PTHR28032">
    <property type="entry name" value="FI02826P"/>
    <property type="match status" value="1"/>
</dbReference>
<dbReference type="PANTHER" id="PTHR28032:SF1">
    <property type="entry name" value="FI02826P"/>
    <property type="match status" value="1"/>
</dbReference>
<dbReference type="Pfam" id="PF08559">
    <property type="entry name" value="Cut8"/>
    <property type="match status" value="1"/>
</dbReference>
<name>STS1_AJEDR</name>
<organism>
    <name type="scientific">Ajellomyces dermatitidis (strain ER-3 / ATCC MYA-2586)</name>
    <name type="common">Blastomyces dermatitidis</name>
    <dbReference type="NCBI Taxonomy" id="559297"/>
    <lineage>
        <taxon>Eukaryota</taxon>
        <taxon>Fungi</taxon>
        <taxon>Dikarya</taxon>
        <taxon>Ascomycota</taxon>
        <taxon>Pezizomycotina</taxon>
        <taxon>Eurotiomycetes</taxon>
        <taxon>Eurotiomycetidae</taxon>
        <taxon>Onygenales</taxon>
        <taxon>Ajellomycetaceae</taxon>
        <taxon>Blastomyces</taxon>
    </lineage>
</organism>
<gene>
    <name type="primary">STS1</name>
    <name type="ORF">BDCG_02909</name>
</gene>
<proteinExistence type="inferred from homology"/>
<sequence length="311" mass="34147">MNSLLATPPVPPHFYEHCRLSPSRSMSSTNPSGNRKRKAEDDYLPSDHDTRMSASPSNSPAFSPRTLPAPRQIKRSRPNISGRPLALSRLLETLDTDALRSILRSMCDRHPELASEVVQTAPRPSVSSALQVLNNYQSALQSSIPLGGNSSSDYAYNRVRQHIVNLLDALSDFTPHFLPPNESQVSTALNYLDGATEIIHRLPRWDTPQHNLEKDAAYEEMAKAWILVIREAGKRGGGIQLQYGGWDQKLSKHNQTAGGKLQDAVNTLSSNLGWMGNQDLSNSQGGDASSIRQQLLSGTYGSGMPLKVGPW</sequence>
<reference key="1">
    <citation type="journal article" date="2015" name="PLoS Genet.">
        <title>The dynamic genome and transcriptome of the human fungal pathogen Blastomyces and close relative Emmonsia.</title>
        <authorList>
            <person name="Munoz J.F."/>
            <person name="Gauthier G.M."/>
            <person name="Desjardins C.A."/>
            <person name="Gallo J.E."/>
            <person name="Holder J."/>
            <person name="Sullivan T.D."/>
            <person name="Marty A.J."/>
            <person name="Carmen J.C."/>
            <person name="Chen Z."/>
            <person name="Ding L."/>
            <person name="Gujja S."/>
            <person name="Magrini V."/>
            <person name="Misas E."/>
            <person name="Mitreva M."/>
            <person name="Priest M."/>
            <person name="Saif S."/>
            <person name="Whiston E.A."/>
            <person name="Young S."/>
            <person name="Zeng Q."/>
            <person name="Goldman W.E."/>
            <person name="Mardis E.R."/>
            <person name="Taylor J.W."/>
            <person name="McEwen J.G."/>
            <person name="Clay O.K."/>
            <person name="Klein B.S."/>
            <person name="Cuomo C.A."/>
        </authorList>
    </citation>
    <scope>NUCLEOTIDE SEQUENCE [LARGE SCALE GENOMIC DNA]</scope>
    <source>
        <strain>ER-3 / ATCC MYA-2586</strain>
    </source>
</reference>
<comment type="function">
    <text evidence="1">Involved in ubiquitin-mediated protein degradation. Regulatory factor in the ubiquitin/proteasome pathway that controls the turnover of proteasome substrates. Targets proteasomes to the nucleus and facilitates the degradation of nuclear proteins (By similarity).</text>
</comment>
<comment type="subunit">
    <text evidence="1">Binds the proteasome.</text>
</comment>
<comment type="subcellular location">
    <subcellularLocation>
        <location evidence="1">Cytoplasm</location>
    </subcellularLocation>
    <subcellularLocation>
        <location evidence="1">Nucleus</location>
    </subcellularLocation>
</comment>
<comment type="similarity">
    <text evidence="3">Belongs to the cut8/STS1 family.</text>
</comment>
<evidence type="ECO:0000250" key="1"/>
<evidence type="ECO:0000256" key="2">
    <source>
        <dbReference type="SAM" id="MobiDB-lite"/>
    </source>
</evidence>
<evidence type="ECO:0000305" key="3"/>
<protein>
    <recommendedName>
        <fullName>Tethering factor for nuclear proteasome STS1</fullName>
    </recommendedName>
</protein>
<feature type="chain" id="PRO_0000409390" description="Tethering factor for nuclear proteasome STS1">
    <location>
        <begin position="1"/>
        <end position="311"/>
    </location>
</feature>
<feature type="region of interest" description="Disordered" evidence="2">
    <location>
        <begin position="1"/>
        <end position="81"/>
    </location>
</feature>
<feature type="compositionally biased region" description="Low complexity" evidence="2">
    <location>
        <begin position="21"/>
        <end position="32"/>
    </location>
</feature>
<feature type="compositionally biased region" description="Basic and acidic residues" evidence="2">
    <location>
        <begin position="38"/>
        <end position="51"/>
    </location>
</feature>
<feature type="compositionally biased region" description="Low complexity" evidence="2">
    <location>
        <begin position="53"/>
        <end position="64"/>
    </location>
</feature>